<feature type="chain" id="PRO_0000168166" description="Reticulon-4">
    <location>
        <begin position="1"/>
        <end position="1162"/>
    </location>
</feature>
<feature type="topological domain" description="Cytoplasmic" evidence="3">
    <location>
        <begin position="1"/>
        <end position="988"/>
    </location>
</feature>
<feature type="transmembrane region" description="Helical" evidence="3">
    <location>
        <begin position="989"/>
        <end position="1009"/>
    </location>
</feature>
<feature type="topological domain" description="Lumenal" evidence="3">
    <location>
        <begin position="1010"/>
        <end position="1078"/>
    </location>
</feature>
<feature type="transmembrane region" description="Helical" evidence="3">
    <location>
        <begin position="1079"/>
        <end position="1099"/>
    </location>
</feature>
<feature type="topological domain" description="Cytoplasmic" evidence="3">
    <location>
        <begin position="1100"/>
        <end position="1162"/>
    </location>
</feature>
<feature type="domain" description="Reticulon" evidence="4">
    <location>
        <begin position="975"/>
        <end position="1162"/>
    </location>
</feature>
<feature type="region of interest" description="Disordered" evidence="5">
    <location>
        <begin position="1"/>
        <end position="183"/>
    </location>
</feature>
<feature type="region of interest" description="Disordered" evidence="5">
    <location>
        <begin position="408"/>
        <end position="432"/>
    </location>
</feature>
<feature type="region of interest" description="Disordered" evidence="5">
    <location>
        <begin position="711"/>
        <end position="730"/>
    </location>
</feature>
<feature type="compositionally biased region" description="Low complexity" evidence="5">
    <location>
        <begin position="7"/>
        <end position="16"/>
    </location>
</feature>
<feature type="compositionally biased region" description="Acidic residues" evidence="5">
    <location>
        <begin position="31"/>
        <end position="54"/>
    </location>
</feature>
<feature type="compositionally biased region" description="Pro residues" evidence="5">
    <location>
        <begin position="85"/>
        <end position="99"/>
    </location>
</feature>
<feature type="compositionally biased region" description="Low complexity" evidence="5">
    <location>
        <begin position="109"/>
        <end position="127"/>
    </location>
</feature>
<feature type="compositionally biased region" description="Basic and acidic residues" evidence="5">
    <location>
        <begin position="408"/>
        <end position="422"/>
    </location>
</feature>
<feature type="compositionally biased region" description="Acidic residues" evidence="5">
    <location>
        <begin position="713"/>
        <end position="730"/>
    </location>
</feature>
<feature type="modified residue" description="N-acetylmethionine" evidence="27">
    <location>
        <position position="1"/>
    </location>
</feature>
<feature type="modified residue" description="Phosphoserine" evidence="2">
    <location>
        <position position="7"/>
    </location>
</feature>
<feature type="modified residue" description="Phosphoserine" evidence="28">
    <location>
        <position position="16"/>
    </location>
</feature>
<feature type="modified residue" description="Phosphoserine" evidence="28">
    <location>
        <position position="105"/>
    </location>
</feature>
<feature type="modified residue" description="Phosphoserine" evidence="26 29">
    <location>
        <position position="145"/>
    </location>
</feature>
<feature type="modified residue" description="Phosphoserine" evidence="30">
    <location>
        <position position="165"/>
    </location>
</feature>
<feature type="modified residue" description="Phosphoserine" evidence="30">
    <location>
        <position position="167"/>
    </location>
</feature>
<feature type="modified residue" description="Phosphoserine" evidence="1">
    <location>
        <position position="329"/>
    </location>
</feature>
<feature type="modified residue" description="Phosphoserine" evidence="29 30">
    <location>
        <position position="344"/>
    </location>
</feature>
<feature type="modified residue" description="Phosphothreonine" evidence="30">
    <location>
        <position position="348"/>
    </location>
</feature>
<feature type="modified residue" description="Phosphoserine" evidence="1">
    <location>
        <position position="426"/>
    </location>
</feature>
<feature type="modified residue" description="Phosphothreonine" evidence="1">
    <location>
        <position position="430"/>
    </location>
</feature>
<feature type="modified residue" description="Phosphoserine" evidence="29 30">
    <location>
        <position position="489"/>
    </location>
</feature>
<feature type="modified residue" description="Phosphoserine" evidence="26 30">
    <location>
        <position position="690"/>
    </location>
</feature>
<feature type="modified residue" description="Phosphoserine" evidence="30">
    <location>
        <position position="727"/>
    </location>
</feature>
<feature type="modified residue" description="Phosphoserine" evidence="30">
    <location>
        <position position="768"/>
    </location>
</feature>
<feature type="modified residue" description="Phosphoserine" evidence="1">
    <location>
        <position position="832"/>
    </location>
</feature>
<feature type="modified residue" description="Phosphothreonine" evidence="1">
    <location>
        <position position="834"/>
    </location>
</feature>
<feature type="modified residue" description="Phosphoserine" evidence="30">
    <location>
        <position position="857"/>
    </location>
</feature>
<feature type="modified residue" description="Phosphoserine" evidence="2">
    <location>
        <position position="961"/>
    </location>
</feature>
<feature type="modified residue" description="N6-acetyllysine" evidence="2">
    <location>
        <position position="1074"/>
    </location>
</feature>
<feature type="splice variant" id="VSP_018088" description="In isoform C." evidence="21 23">
    <location>
        <begin position="1"/>
        <end position="963"/>
    </location>
</feature>
<feature type="splice variant" id="VSP_018089" description="In isoform D." evidence="21">
    <location>
        <begin position="1"/>
        <end position="116"/>
    </location>
</feature>
<feature type="splice variant" id="VSP_018090" description="In isoform D." evidence="21">
    <original>LPPAAAVLPSKLPEDDEPPARPPAPAGASPLAEPAAPPSTPAAPKRRGSGSVD</original>
    <variation>MAPPLAGGGQKGGAASEAWVPSLFVGVSGSTCTAAKSLVPIPARSSRLSAARN</variation>
    <location>
        <begin position="117"/>
        <end position="169"/>
    </location>
</feature>
<feature type="splice variant" id="VSP_060062" description="In isoform B." evidence="21">
    <original>SVDETLFALPAASEPVIPSSAEKIMDLKEQPGNTVSSGQEDFPSVLFETAASLPSLSPLSTVSFKEHGYLGNLSAVASTEGTIEETLNEASRELPERATNPFVNRESAEFSVLEYSEMGSSFNGSPKGESAMLVENTKEEVIVRSKDKEDLVCSAALHNPQESPATLTKVVKEDGVMSPEKTMDIFNEMKMSVVAPVREEYADFKPFEQAWEVKDTYEGSRDVLAARANMESKVDKKCFEDSLEQKGHGKDSESRNENASFPRTPELVKDGSRAYITCDSFSSATESTAANIFPVLEDHTSENKTDEKKIEERKAQIITEKTSPKTSNPFLVAIHDSEADYVTTDNLSKVTEAVVATMPEGLTPDLVQEACESELNEATGTKIAYETKVDLVQTSEAIQESIYPTAQLCPSFEEAEATPSPVLPDIVMEAPLNSLLPSTGASVAQPSASPLEVPSPVSYDGIKLEPENPPPYEEAMSVALKTSDSKEEIKEPESFNAAAQEAEAPYISIACDLIKETKLSTEPSPEFSNYSEIAKFEKSVPDHCELVDDSSPESEPVDLFSDDSIPEVPQTQEEAVMLMKESLTEVSETVTQHKHKERLSASPQEVGKPYLESFQPNLHITKDAASNEIPTLTKKETISLQMEEFNTAIYSNDDLLSSKEDKMKESETFSDSSPIEIIDEFPTFVSAKDDSPKEYTDLEVSNKSEIANVQSGANSLPCSELPCDLSFKNTYPKDEAHVSDEFSKSRSSVSKVPLLLPNVSALESQIEMGNIVKPKVLTKEAEEKLPSDTEKEDRSLTAVLSAELNKTS</original>
    <variation>SV</variation>
    <location>
        <begin position="167"/>
        <end position="974"/>
    </location>
</feature>
<feature type="splice variant" id="VSP_060063" description="In isoform B2." evidence="21">
    <location>
        <begin position="188"/>
        <end position="974"/>
    </location>
</feature>
<feature type="splice variant" id="VSP_018091" description="In isoform C." evidence="21 23">
    <original>AVLSAELNKTS</original>
    <variation>MDDQKKRWKDK</variation>
    <location>
        <begin position="964"/>
        <end position="974"/>
    </location>
</feature>
<feature type="sequence conflict" description="In Ref. 4; BAD90301." evidence="24" ref="4">
    <original>I</original>
    <variation>V</variation>
    <location>
        <position position="4"/>
    </location>
</feature>
<feature type="sequence conflict" description="In Ref. 4; BAD90301." evidence="24" ref="4">
    <original>S</original>
    <variation>R</variation>
    <location>
        <position position="16"/>
    </location>
</feature>
<feature type="sequence conflict" description="In Ref. 4; BAD90301." evidence="24" ref="4">
    <original>P</original>
    <variation>L</variation>
    <location>
        <position position="21"/>
    </location>
</feature>
<feature type="sequence conflict" description="In Ref. 3; AAM77068." evidence="24" ref="3">
    <original>A</original>
    <variation>V</variation>
    <location>
        <position position="67"/>
    </location>
</feature>
<feature type="sequence conflict" description="In Ref. 3; AAM77068 and 4; BAD90301." evidence="24" ref="3 4">
    <original>G</original>
    <variation>S</variation>
    <location>
        <position position="413"/>
    </location>
</feature>
<feature type="sequence conflict" description="In Ref. 3; AAM77068 and 4; BAD90301." evidence="24" ref="3 4">
    <original>R</original>
    <variation>S</variation>
    <location>
        <position position="429"/>
    </location>
</feature>
<feature type="sequence conflict" description="In Ref. 3; AAM77068 and 4; BAD90301." evidence="24" ref="3 4">
    <original>S</original>
    <variation>T</variation>
    <location>
        <position position="448"/>
    </location>
</feature>
<feature type="sequence conflict" description="In Ref. 7; AAH32192." evidence="24" ref="7">
    <original>KTSP</original>
    <variation>HASA</variation>
    <location>
        <begin position="487"/>
        <end position="490"/>
    </location>
</feature>
<feature type="sequence conflict" description="In Ref. 3; AAM77068, 7; AAH32192 and 4; BAD90301." evidence="24" ref="3 7 4">
    <original>S</original>
    <variation>A</variation>
    <location>
        <position position="651"/>
    </location>
</feature>
<feature type="sequence conflict" description="In Ref. 4; BAD90301." evidence="24" ref="4">
    <original>A</original>
    <variation>V</variation>
    <location>
        <position position="665"/>
    </location>
</feature>
<feature type="sequence conflict" description="In Ref. 3; AAM77068 and 8; BAC75974." evidence="24" ref="3 8">
    <original>E</original>
    <variation>G</variation>
    <location>
        <position position="692"/>
    </location>
</feature>
<feature type="sequence conflict" description="In Ref. 4; BAD90301." evidence="24" ref="4">
    <original>E</original>
    <variation>D</variation>
    <location>
        <position position="733"/>
    </location>
</feature>
<feature type="sequence conflict" description="In Ref. 4; BAD90301." evidence="24" ref="4">
    <original>V</original>
    <variation>L</variation>
    <location>
        <position position="772"/>
    </location>
</feature>
<feature type="sequence conflict" description="In Ref. 8; BAC75974." evidence="24" ref="8">
    <original>S</original>
    <variation>F</variation>
    <location>
        <position position="916"/>
    </location>
</feature>
<feature type="sequence conflict" description="In Ref. 3; AAM77068." evidence="24" ref="3">
    <original>V</original>
    <variation>VY</variation>
    <location>
        <position position="990"/>
    </location>
</feature>
<feature type="helix" evidence="31">
    <location>
        <begin position="1026"/>
        <end position="1029"/>
    </location>
</feature>
<feature type="helix" evidence="31">
    <location>
        <begin position="1031"/>
        <end position="1035"/>
    </location>
</feature>
<feature type="turn" evidence="31">
    <location>
        <begin position="1037"/>
        <end position="1040"/>
    </location>
</feature>
<feature type="helix" evidence="31">
    <location>
        <begin position="1044"/>
        <end position="1053"/>
    </location>
</feature>
<feature type="helix" evidence="31">
    <location>
        <begin position="1057"/>
        <end position="1063"/>
    </location>
</feature>
<feature type="turn" evidence="31">
    <location>
        <begin position="1065"/>
        <end position="1067"/>
    </location>
</feature>
<feature type="helix" evidence="31">
    <location>
        <begin position="1068"/>
        <end position="1082"/>
    </location>
</feature>
<feature type="helix" evidence="31">
    <location>
        <begin position="1087"/>
        <end position="1089"/>
    </location>
</feature>
<dbReference type="EMBL" id="AY102280">
    <property type="protein sequence ID" value="AAM73502.1"/>
    <property type="molecule type" value="mRNA"/>
</dbReference>
<dbReference type="EMBL" id="AY102281">
    <property type="protein sequence ID" value="AAM73503.1"/>
    <property type="molecule type" value="mRNA"/>
</dbReference>
<dbReference type="EMBL" id="AY102282">
    <property type="protein sequence ID" value="AAM73504.1"/>
    <property type="molecule type" value="mRNA"/>
</dbReference>
<dbReference type="EMBL" id="AY102283">
    <property type="protein sequence ID" value="AAM73505.1"/>
    <property type="molecule type" value="mRNA"/>
</dbReference>
<dbReference type="EMBL" id="AY102284">
    <property type="protein sequence ID" value="AAM73506.1"/>
    <property type="molecule type" value="mRNA"/>
</dbReference>
<dbReference type="EMBL" id="AY102286">
    <property type="protein sequence ID" value="AAM73507.1"/>
    <property type="molecule type" value="Genomic_DNA"/>
</dbReference>
<dbReference type="EMBL" id="AY102286">
    <property type="protein sequence ID" value="AAM73508.1"/>
    <property type="molecule type" value="Genomic_DNA"/>
</dbReference>
<dbReference type="EMBL" id="AY102286">
    <property type="protein sequence ID" value="AAM73509.1"/>
    <property type="molecule type" value="Genomic_DNA"/>
</dbReference>
<dbReference type="EMBL" id="AY102286">
    <property type="protein sequence ID" value="AAM73510.1"/>
    <property type="molecule type" value="Genomic_DNA"/>
</dbReference>
<dbReference type="EMBL" id="AY102286">
    <property type="protein sequence ID" value="AAM73511.1"/>
    <property type="molecule type" value="Genomic_DNA"/>
</dbReference>
<dbReference type="EMBL" id="AF326337">
    <property type="protein sequence ID" value="AAK08076.1"/>
    <property type="molecule type" value="mRNA"/>
</dbReference>
<dbReference type="EMBL" id="AY114152">
    <property type="protein sequence ID" value="AAM77068.1"/>
    <property type="molecule type" value="mRNA"/>
</dbReference>
<dbReference type="EMBL" id="AK220511">
    <property type="protein sequence ID" value="BAD90301.1"/>
    <property type="molecule type" value="mRNA"/>
</dbReference>
<dbReference type="EMBL" id="CH466604">
    <property type="protein sequence ID" value="EDL23794.1"/>
    <property type="molecule type" value="Genomic_DNA"/>
</dbReference>
<dbReference type="EMBL" id="AL929371">
    <property type="status" value="NOT_ANNOTATED_CDS"/>
    <property type="molecule type" value="Genomic_DNA"/>
</dbReference>
<dbReference type="EMBL" id="BC032192">
    <property type="protein sequence ID" value="AAH32192.1"/>
    <property type="status" value="ALT_INIT"/>
    <property type="molecule type" value="mRNA"/>
</dbReference>
<dbReference type="EMBL" id="BC056373">
    <property type="status" value="NOT_ANNOTATED_CDS"/>
    <property type="molecule type" value="mRNA"/>
</dbReference>
<dbReference type="EMBL" id="AB073672">
    <property type="protein sequence ID" value="BAC75974.1"/>
    <property type="molecule type" value="mRNA"/>
</dbReference>
<dbReference type="EMBL" id="AK003859">
    <property type="status" value="NOT_ANNOTATED_CDS"/>
    <property type="molecule type" value="mRNA"/>
</dbReference>
<dbReference type="CCDS" id="CCDS24499.1">
    <molecule id="Q99P72-5"/>
</dbReference>
<dbReference type="CCDS" id="CCDS24500.1">
    <molecule id="Q99P72-4"/>
</dbReference>
<dbReference type="CCDS" id="CCDS24501.1">
    <molecule id="Q99P72-2"/>
</dbReference>
<dbReference type="CCDS" id="CCDS24502.1">
    <molecule id="Q99P72-3"/>
</dbReference>
<dbReference type="CCDS" id="CCDS24503.1">
    <molecule id="Q99P72-1"/>
</dbReference>
<dbReference type="RefSeq" id="NP_077188.1">
    <molecule id="Q99P72-1"/>
    <property type="nucleotide sequence ID" value="NM_024226.4"/>
</dbReference>
<dbReference type="RefSeq" id="NP_918940.1">
    <molecule id="Q99P72-3"/>
    <property type="nucleotide sequence ID" value="NM_194051.3"/>
</dbReference>
<dbReference type="RefSeq" id="NP_918941.1">
    <molecule id="Q99P72-5"/>
    <property type="nucleotide sequence ID" value="NM_194052.3"/>
</dbReference>
<dbReference type="RefSeq" id="NP_918942.1">
    <molecule id="Q99P72-4"/>
    <property type="nucleotide sequence ID" value="NM_194053.3"/>
</dbReference>
<dbReference type="RefSeq" id="NP_918943.1">
    <molecule id="Q99P72-2"/>
    <property type="nucleotide sequence ID" value="NM_194054.3"/>
</dbReference>
<dbReference type="PDB" id="2KO2">
    <property type="method" value="NMR"/>
    <property type="chains" value="A=1025-1090"/>
</dbReference>
<dbReference type="PDBsum" id="2KO2"/>
<dbReference type="BMRB" id="Q99P72"/>
<dbReference type="SMR" id="Q99P72"/>
<dbReference type="BioGRID" id="212938">
    <property type="interactions" value="27"/>
</dbReference>
<dbReference type="CORUM" id="Q99P72"/>
<dbReference type="DIP" id="DIP-41976N"/>
<dbReference type="FunCoup" id="Q99P72">
    <property type="interactions" value="1201"/>
</dbReference>
<dbReference type="IntAct" id="Q99P72">
    <property type="interactions" value="6"/>
</dbReference>
<dbReference type="MINT" id="Q99P72"/>
<dbReference type="STRING" id="10090.ENSMUSP00000099907"/>
<dbReference type="GlyGen" id="Q99P72">
    <property type="glycosylation" value="8 sites, 2 N-linked glycans (2 sites), 1 O-linked glycan (3 sites)"/>
</dbReference>
<dbReference type="iPTMnet" id="Q99P72"/>
<dbReference type="PhosphoSitePlus" id="Q99P72"/>
<dbReference type="SwissPalm" id="Q99P72"/>
<dbReference type="jPOST" id="Q99P72"/>
<dbReference type="PaxDb" id="10090-ENSMUSP00000099907"/>
<dbReference type="PeptideAtlas" id="Q99P72"/>
<dbReference type="ProteomicsDB" id="256639">
    <molecule id="Q99P72-2"/>
</dbReference>
<dbReference type="ProteomicsDB" id="256640">
    <molecule id="Q99P72-3"/>
</dbReference>
<dbReference type="ProteomicsDB" id="256641">
    <molecule id="Q99P72-1"/>
</dbReference>
<dbReference type="ProteomicsDB" id="331244"/>
<dbReference type="ProteomicsDB" id="343118"/>
<dbReference type="Pumba" id="Q99P72"/>
<dbReference type="Antibodypedia" id="3949">
    <property type="antibodies" value="550 antibodies from 44 providers"/>
</dbReference>
<dbReference type="DNASU" id="68585"/>
<dbReference type="Ensembl" id="ENSMUST00000060992.6">
    <molecule id="Q99P72-1"/>
    <property type="protein sequence ID" value="ENSMUSP00000053754.5"/>
    <property type="gene ID" value="ENSMUSG00000020458.17"/>
</dbReference>
<dbReference type="Ensembl" id="ENSMUST00000078830.11">
    <molecule id="Q99P72-5"/>
    <property type="protein sequence ID" value="ENSMUSP00000077875.5"/>
    <property type="gene ID" value="ENSMUSG00000020458.17"/>
</dbReference>
<dbReference type="Ensembl" id="ENSMUST00000102841.8">
    <molecule id="Q99P72-3"/>
    <property type="protein sequence ID" value="ENSMUSP00000099905.2"/>
    <property type="gene ID" value="ENSMUSG00000020458.17"/>
</dbReference>
<dbReference type="Ensembl" id="ENSMUST00000102842.10">
    <molecule id="Q99P72-4"/>
    <property type="protein sequence ID" value="ENSMUSP00000099906.4"/>
    <property type="gene ID" value="ENSMUSG00000020458.17"/>
</dbReference>
<dbReference type="Ensembl" id="ENSMUST00000102843.10">
    <molecule id="Q99P72-2"/>
    <property type="protein sequence ID" value="ENSMUSP00000099907.4"/>
    <property type="gene ID" value="ENSMUSG00000020458.17"/>
</dbReference>
<dbReference type="Ensembl" id="ENSMUST00000170731.8">
    <molecule id="Q99P72-5"/>
    <property type="protein sequence ID" value="ENSMUSP00000126413.2"/>
    <property type="gene ID" value="ENSMUSG00000020458.17"/>
</dbReference>
<dbReference type="GeneID" id="68585"/>
<dbReference type="KEGG" id="mmu:68585"/>
<dbReference type="UCSC" id="uc007ihk.2">
    <molecule id="Q99P72-2"/>
    <property type="organism name" value="mouse"/>
</dbReference>
<dbReference type="UCSC" id="uc007ihl.2">
    <property type="organism name" value="mouse"/>
</dbReference>
<dbReference type="UCSC" id="uc007ihm.2">
    <property type="organism name" value="mouse"/>
</dbReference>
<dbReference type="UCSC" id="uc007ihn.2">
    <molecule id="Q99P72-3"/>
    <property type="organism name" value="mouse"/>
</dbReference>
<dbReference type="UCSC" id="uc007iho.2">
    <property type="organism name" value="mouse"/>
</dbReference>
<dbReference type="AGR" id="MGI:1915835"/>
<dbReference type="CTD" id="57142"/>
<dbReference type="MGI" id="MGI:1915835">
    <property type="gene designation" value="Rtn4"/>
</dbReference>
<dbReference type="VEuPathDB" id="HostDB:ENSMUSG00000020458"/>
<dbReference type="eggNOG" id="KOG1792">
    <property type="taxonomic scope" value="Eukaryota"/>
</dbReference>
<dbReference type="GeneTree" id="ENSGT00940000156568"/>
<dbReference type="HOGENOM" id="CLU_048580_0_0_1"/>
<dbReference type="InParanoid" id="Q99P72"/>
<dbReference type="OMA" id="DGQKKHW"/>
<dbReference type="OrthoDB" id="567788at2759"/>
<dbReference type="PhylomeDB" id="Q99P72"/>
<dbReference type="TreeFam" id="TF105431"/>
<dbReference type="Reactome" id="R-MMU-193634">
    <property type="pathway name" value="Axonal growth inhibition (RHOA activation)"/>
</dbReference>
<dbReference type="BioGRID-ORCS" id="68585">
    <property type="hits" value="3 hits in 73 CRISPR screens"/>
</dbReference>
<dbReference type="CD-CODE" id="CE726F99">
    <property type="entry name" value="Postsynaptic density"/>
</dbReference>
<dbReference type="ChiTaRS" id="Rtn4">
    <property type="organism name" value="mouse"/>
</dbReference>
<dbReference type="EvolutionaryTrace" id="Q99P72"/>
<dbReference type="PRO" id="PR:Q99P72"/>
<dbReference type="Proteomes" id="UP000000589">
    <property type="component" value="Chromosome 11"/>
</dbReference>
<dbReference type="RNAct" id="Q99P72">
    <property type="molecule type" value="protein"/>
</dbReference>
<dbReference type="Bgee" id="ENSMUSG00000020458">
    <property type="expression patterns" value="Expressed in dorsal striatum and 285 other cell types or tissues"/>
</dbReference>
<dbReference type="GO" id="GO:0070161">
    <property type="term" value="C:anchoring junction"/>
    <property type="evidence" value="ECO:0007669"/>
    <property type="project" value="UniProtKB-SubCell"/>
</dbReference>
<dbReference type="GO" id="GO:0030424">
    <property type="term" value="C:axon"/>
    <property type="evidence" value="ECO:0000314"/>
    <property type="project" value="MGI"/>
</dbReference>
<dbReference type="GO" id="GO:0030054">
    <property type="term" value="C:cell junction"/>
    <property type="evidence" value="ECO:0000250"/>
    <property type="project" value="UniProtKB"/>
</dbReference>
<dbReference type="GO" id="GO:0042995">
    <property type="term" value="C:cell projection"/>
    <property type="evidence" value="ECO:0000314"/>
    <property type="project" value="MGI"/>
</dbReference>
<dbReference type="GO" id="GO:0044294">
    <property type="term" value="C:dendritic growth cone"/>
    <property type="evidence" value="ECO:0000314"/>
    <property type="project" value="MGI"/>
</dbReference>
<dbReference type="GO" id="GO:0005783">
    <property type="term" value="C:endoplasmic reticulum"/>
    <property type="evidence" value="ECO:0000314"/>
    <property type="project" value="MGI"/>
</dbReference>
<dbReference type="GO" id="GO:0005789">
    <property type="term" value="C:endoplasmic reticulum membrane"/>
    <property type="evidence" value="ECO:0000314"/>
    <property type="project" value="UniProtKB"/>
</dbReference>
<dbReference type="GO" id="GO:0098826">
    <property type="term" value="C:endoplasmic reticulum tubular network membrane"/>
    <property type="evidence" value="ECO:0000250"/>
    <property type="project" value="UniProtKB"/>
</dbReference>
<dbReference type="GO" id="GO:0098978">
    <property type="term" value="C:glutamatergic synapse"/>
    <property type="evidence" value="ECO:0000314"/>
    <property type="project" value="SynGO"/>
</dbReference>
<dbReference type="GO" id="GO:0043025">
    <property type="term" value="C:neuronal cell body"/>
    <property type="evidence" value="ECO:0000314"/>
    <property type="project" value="MGI"/>
</dbReference>
<dbReference type="GO" id="GO:0005635">
    <property type="term" value="C:nuclear envelope"/>
    <property type="evidence" value="ECO:0000250"/>
    <property type="project" value="UniProtKB"/>
</dbReference>
<dbReference type="GO" id="GO:0005886">
    <property type="term" value="C:plasma membrane"/>
    <property type="evidence" value="ECO:0007669"/>
    <property type="project" value="UniProtKB-SubCell"/>
</dbReference>
<dbReference type="GO" id="GO:0098794">
    <property type="term" value="C:postsynapse"/>
    <property type="evidence" value="ECO:0000314"/>
    <property type="project" value="SynGO"/>
</dbReference>
<dbReference type="GO" id="GO:0014069">
    <property type="term" value="C:postsynaptic density"/>
    <property type="evidence" value="ECO:0000314"/>
    <property type="project" value="MGI"/>
</dbReference>
<dbReference type="GO" id="GO:0045202">
    <property type="term" value="C:synapse"/>
    <property type="evidence" value="ECO:0000314"/>
    <property type="project" value="UniProtKB"/>
</dbReference>
<dbReference type="GO" id="GO:0008289">
    <property type="term" value="F:lipid binding"/>
    <property type="evidence" value="ECO:0000269"/>
    <property type="project" value="DisProt"/>
</dbReference>
<dbReference type="GO" id="GO:0042803">
    <property type="term" value="F:protein homodimerization activity"/>
    <property type="evidence" value="ECO:0000250"/>
    <property type="project" value="UniProtKB"/>
</dbReference>
<dbReference type="GO" id="GO:0031625">
    <property type="term" value="F:ubiquitin protein ligase binding"/>
    <property type="evidence" value="ECO:0007669"/>
    <property type="project" value="Ensembl"/>
</dbReference>
<dbReference type="GO" id="GO:0007413">
    <property type="term" value="P:axonal fasciculation"/>
    <property type="evidence" value="ECO:0000315"/>
    <property type="project" value="UniProtKB"/>
</dbReference>
<dbReference type="GO" id="GO:0001825">
    <property type="term" value="P:blastocyst formation"/>
    <property type="evidence" value="ECO:0000315"/>
    <property type="project" value="MGI"/>
</dbReference>
<dbReference type="GO" id="GO:0060317">
    <property type="term" value="P:cardiac epithelial to mesenchymal transition"/>
    <property type="evidence" value="ECO:0000315"/>
    <property type="project" value="MGI"/>
</dbReference>
<dbReference type="GO" id="GO:0120078">
    <property type="term" value="P:cell adhesion involved in sprouting angiogenesis"/>
    <property type="evidence" value="ECO:0000250"/>
    <property type="project" value="UniProtKB"/>
</dbReference>
<dbReference type="GO" id="GO:0035441">
    <property type="term" value="P:cell migration involved in vasculogenesis"/>
    <property type="evidence" value="ECO:0000315"/>
    <property type="project" value="UniProtKB"/>
</dbReference>
<dbReference type="GO" id="GO:0071456">
    <property type="term" value="P:cellular response to hypoxia"/>
    <property type="evidence" value="ECO:0000314"/>
    <property type="project" value="UniProtKB"/>
</dbReference>
<dbReference type="GO" id="GO:0022009">
    <property type="term" value="P:central nervous system vasculogenesis"/>
    <property type="evidence" value="ECO:0000315"/>
    <property type="project" value="UniProtKB"/>
</dbReference>
<dbReference type="GO" id="GO:0021801">
    <property type="term" value="P:cerebral cortex radial glia-guided migration"/>
    <property type="evidence" value="ECO:0000315"/>
    <property type="project" value="UniProtKB"/>
</dbReference>
<dbReference type="GO" id="GO:0071787">
    <property type="term" value="P:endoplasmic reticulum tubular network formation"/>
    <property type="evidence" value="ECO:0000250"/>
    <property type="project" value="UniProtKB"/>
</dbReference>
<dbReference type="GO" id="GO:1990809">
    <property type="term" value="P:endoplasmic reticulum tubular network membrane organization"/>
    <property type="evidence" value="ECO:0000250"/>
    <property type="project" value="UniProtKB"/>
</dbReference>
<dbReference type="GO" id="GO:0071786">
    <property type="term" value="P:endoplasmic reticulum tubular network organization"/>
    <property type="evidence" value="ECO:0000250"/>
    <property type="project" value="UniProtKB"/>
</dbReference>
<dbReference type="GO" id="GO:0090156">
    <property type="term" value="P:intracellular sphingolipid homeostasis"/>
    <property type="evidence" value="ECO:0000315"/>
    <property type="project" value="UniProtKB"/>
</dbReference>
<dbReference type="GO" id="GO:0002523">
    <property type="term" value="P:leukocyte migration involved in inflammatory response"/>
    <property type="evidence" value="ECO:0000315"/>
    <property type="project" value="UniProtKB"/>
</dbReference>
<dbReference type="GO" id="GO:0050804">
    <property type="term" value="P:modulation of chemical synaptic transmission"/>
    <property type="evidence" value="ECO:0000314"/>
    <property type="project" value="SynGO"/>
</dbReference>
<dbReference type="GO" id="GO:1902430">
    <property type="term" value="P:negative regulation of amyloid-beta formation"/>
    <property type="evidence" value="ECO:0000250"/>
    <property type="project" value="UniProtKB"/>
</dbReference>
<dbReference type="GO" id="GO:0030517">
    <property type="term" value="P:negative regulation of axon extension"/>
    <property type="evidence" value="ECO:0000315"/>
    <property type="project" value="UniProtKB"/>
</dbReference>
<dbReference type="GO" id="GO:1903860">
    <property type="term" value="P:negative regulation of dendrite extension"/>
    <property type="evidence" value="ECO:0000315"/>
    <property type="project" value="MGI"/>
</dbReference>
<dbReference type="GO" id="GO:1905943">
    <property type="term" value="P:negative regulation of formation of growth cone in injured axon"/>
    <property type="evidence" value="ECO:0000315"/>
    <property type="project" value="MGI"/>
</dbReference>
<dbReference type="GO" id="GO:2001213">
    <property type="term" value="P:negative regulation of vasculogenesis"/>
    <property type="evidence" value="ECO:0000315"/>
    <property type="project" value="UniProtKB"/>
</dbReference>
<dbReference type="GO" id="GO:0007399">
    <property type="term" value="P:nervous system development"/>
    <property type="evidence" value="ECO:0000314"/>
    <property type="project" value="MGI"/>
</dbReference>
<dbReference type="GO" id="GO:0051292">
    <property type="term" value="P:nuclear pore complex assembly"/>
    <property type="evidence" value="ECO:0000250"/>
    <property type="project" value="UniProtKB"/>
</dbReference>
<dbReference type="GO" id="GO:0045766">
    <property type="term" value="P:positive regulation of angiogenesis"/>
    <property type="evidence" value="ECO:0000315"/>
    <property type="project" value="UniProtKB"/>
</dbReference>
<dbReference type="GO" id="GO:1905653">
    <property type="term" value="P:positive regulation of artery morphogenesis"/>
    <property type="evidence" value="ECO:0000315"/>
    <property type="project" value="UniProtKB"/>
</dbReference>
<dbReference type="GO" id="GO:0048694">
    <property type="term" value="P:positive regulation of collateral sprouting of injured axon"/>
    <property type="evidence" value="ECO:0000315"/>
    <property type="project" value="MGI"/>
</dbReference>
<dbReference type="GO" id="GO:0010634">
    <property type="term" value="P:positive regulation of epithelial cell migration"/>
    <property type="evidence" value="ECO:0007669"/>
    <property type="project" value="Ensembl"/>
</dbReference>
<dbReference type="GO" id="GO:1905580">
    <property type="term" value="P:positive regulation of ERBB3 signaling pathway"/>
    <property type="evidence" value="ECO:0007669"/>
    <property type="project" value="Ensembl"/>
</dbReference>
<dbReference type="GO" id="GO:2000347">
    <property type="term" value="P:positive regulation of hepatocyte proliferation"/>
    <property type="evidence" value="ECO:0000315"/>
    <property type="project" value="UniProtKB"/>
</dbReference>
<dbReference type="GO" id="GO:0060907">
    <property type="term" value="P:positive regulation of macrophage cytokine production"/>
    <property type="evidence" value="ECO:0000315"/>
    <property type="project" value="UniProtKB"/>
</dbReference>
<dbReference type="GO" id="GO:1905523">
    <property type="term" value="P:positive regulation of macrophage migration"/>
    <property type="evidence" value="ECO:0000315"/>
    <property type="project" value="UniProtKB"/>
</dbReference>
<dbReference type="GO" id="GO:0033601">
    <property type="term" value="P:positive regulation of mammary gland epithelial cell proliferation"/>
    <property type="evidence" value="ECO:0007669"/>
    <property type="project" value="Ensembl"/>
</dbReference>
<dbReference type="GO" id="GO:1902624">
    <property type="term" value="P:positive regulation of neutrophil migration"/>
    <property type="evidence" value="ECO:0000315"/>
    <property type="project" value="UniProtKB"/>
</dbReference>
<dbReference type="GO" id="GO:0051897">
    <property type="term" value="P:positive regulation of phosphatidylinositol 3-kinase/protein kinase B signal transduction"/>
    <property type="evidence" value="ECO:0007669"/>
    <property type="project" value="Ensembl"/>
</dbReference>
<dbReference type="GO" id="GO:1905552">
    <property type="term" value="P:positive regulation of protein localization to endoplasmic reticulum"/>
    <property type="evidence" value="ECO:0007669"/>
    <property type="project" value="Ensembl"/>
</dbReference>
<dbReference type="GO" id="GO:0035022">
    <property type="term" value="P:positive regulation of Rac protein signal transduction"/>
    <property type="evidence" value="ECO:0000315"/>
    <property type="project" value="UniProtKB"/>
</dbReference>
<dbReference type="GO" id="GO:0034165">
    <property type="term" value="P:positive regulation of toll-like receptor 9 signaling pathway"/>
    <property type="evidence" value="ECO:0000315"/>
    <property type="project" value="UniProtKB"/>
</dbReference>
<dbReference type="GO" id="GO:0061462">
    <property type="term" value="P:protein localization to lysosome"/>
    <property type="evidence" value="ECO:0000315"/>
    <property type="project" value="UniProtKB"/>
</dbReference>
<dbReference type="GO" id="GO:0050821">
    <property type="term" value="P:protein stabilization"/>
    <property type="evidence" value="ECO:0000315"/>
    <property type="project" value="CAFA"/>
</dbReference>
<dbReference type="GO" id="GO:2000172">
    <property type="term" value="P:regulation of branching morphogenesis of a nerve"/>
    <property type="evidence" value="ECO:0000315"/>
    <property type="project" value="UniProtKB"/>
</dbReference>
<dbReference type="GO" id="GO:0030334">
    <property type="term" value="P:regulation of cell migration"/>
    <property type="evidence" value="ECO:0000250"/>
    <property type="project" value="UniProtKB"/>
</dbReference>
<dbReference type="GO" id="GO:0051960">
    <property type="term" value="P:regulation of nervous system development"/>
    <property type="evidence" value="ECO:0000315"/>
    <property type="project" value="UniProtKB"/>
</dbReference>
<dbReference type="GO" id="GO:0150052">
    <property type="term" value="P:regulation of postsynapse assembly"/>
    <property type="evidence" value="ECO:0000314"/>
    <property type="project" value="SynGO"/>
</dbReference>
<dbReference type="FunFam" id="1.20.5.2480:FF:000001">
    <property type="entry name" value="Reticulon"/>
    <property type="match status" value="1"/>
</dbReference>
<dbReference type="Gene3D" id="1.20.5.2480">
    <property type="match status" value="1"/>
</dbReference>
<dbReference type="InterPro" id="IPR003388">
    <property type="entry name" value="Reticulon"/>
</dbReference>
<dbReference type="InterPro" id="IPR046964">
    <property type="entry name" value="RTN1-4"/>
</dbReference>
<dbReference type="PANTHER" id="PTHR45799:SF1">
    <property type="entry name" value="RETICULON-4"/>
    <property type="match status" value="1"/>
</dbReference>
<dbReference type="PANTHER" id="PTHR45799">
    <property type="entry name" value="RETICULON-LIKE PROTEIN"/>
    <property type="match status" value="1"/>
</dbReference>
<dbReference type="Pfam" id="PF02453">
    <property type="entry name" value="Reticulon"/>
    <property type="match status" value="1"/>
</dbReference>
<dbReference type="PROSITE" id="PS50845">
    <property type="entry name" value="RETICULON"/>
    <property type="match status" value="1"/>
</dbReference>
<keyword id="KW-0002">3D-structure</keyword>
<keyword id="KW-0007">Acetylation</keyword>
<keyword id="KW-0025">Alternative splicing</keyword>
<keyword id="KW-0965">Cell junction</keyword>
<keyword id="KW-1003">Cell membrane</keyword>
<keyword id="KW-0903">Direct protein sequencing</keyword>
<keyword id="KW-0256">Endoplasmic reticulum</keyword>
<keyword id="KW-0472">Membrane</keyword>
<keyword id="KW-0524">Neurogenesis</keyword>
<keyword id="KW-0597">Phosphoprotein</keyword>
<keyword id="KW-1185">Reference proteome</keyword>
<keyword id="KW-0770">Synapse</keyword>
<keyword id="KW-0812">Transmembrane</keyword>
<keyword id="KW-1133">Transmembrane helix</keyword>
<sequence>MEDIDQSSLVSSSADSPPRPPPAFKYQFVTEPEDEEDEEDEEEEEDDEDLEELEVLERKPAAGLSAAPVPPAAAPLLDFSSDSVPPAPRGPLPAAPPTAPERQPSWERSPAASAPSLPPAAAVLPSKLPEDDEPPARPPAPAGASPLAEPAAPPSTPAAPKRRGSGSVDETLFALPAASEPVIPSSAEKIMDLKEQPGNTVSSGQEDFPSVLFETAASLPSLSPLSTVSFKEHGYLGNLSAVASTEGTIEETLNEASRELPERATNPFVNRESAEFSVLEYSEMGSSFNGSPKGESAMLVENTKEEVIVRSKDKEDLVCSAALHNPQESPATLTKVVKEDGVMSPEKTMDIFNEMKMSVVAPVREEYADFKPFEQAWEVKDTYEGSRDVLAARANMESKVDKKCFEDSLEQKGHGKDSESRNENASFPRTPELVKDGSRAYITCDSFSSATESTAANIFPVLEDHTSENKTDEKKIEERKAQIITEKTSPKTSNPFLVAIHDSEADYVTTDNLSKVTEAVVATMPEGLTPDLVQEACESELNEATGTKIAYETKVDLVQTSEAIQESIYPTAQLCPSFEEAEATPSPVLPDIVMEAPLNSLLPSTGASVAQPSASPLEVPSPVSYDGIKLEPENPPPYEEAMSVALKTSDSKEEIKEPESFNAAAQEAEAPYISIACDLIKETKLSTEPSPEFSNYSEIAKFEKSVPDHCELVDDSSPESEPVDLFSDDSIPEVPQTQEEAVMLMKESLTEVSETVTQHKHKERLSASPQEVGKPYLESFQPNLHITKDAASNEIPTLTKKETISLQMEEFNTAIYSNDDLLSSKEDKMKESETFSDSSPIEIIDEFPTFVSAKDDSPKEYTDLEVSNKSEIANVQSGANSLPCSELPCDLSFKNTYPKDEAHVSDEFSKSRSSVSKVPLLLPNVSALESQIEMGNIVKPKVLTKEAEEKLPSDTEKEDRSLTAVLSAELNKTSVVDLLYWRDIKKTGVVFGASLFLLLSLTVFSIVSVTAYIALALLSVTISFRIYKGVIQAIQKSDEGHPFRAYLESEVAISEELVQKYSNSALGHVNSTIKELRRLFLVDDLVDSLKFAVLMWVFTYVGALFNGLTLLILALISLFSIPVIYERHQAQIDHYLGLANKSVKDAMAKIQAKIPGLKRKAE</sequence>
<protein>
    <recommendedName>
        <fullName evidence="24">Reticulon-4</fullName>
    </recommendedName>
    <alternativeName>
        <fullName>Neurite outgrowth inhibitor</fullName>
        <shortName evidence="22">Nogo protein</shortName>
    </alternativeName>
</protein>
<accession>Q99P72</accession>
<accession>Q5DTK9</accession>
<accession>Q78NS1</accession>
<accession>Q7TNB7</accession>
<accession>Q80W95</accession>
<accession>Q8BGK7</accession>
<accession>Q8BGM9</accession>
<accession>Q8BH78</accession>
<accession>Q8BHF5</accession>
<accession>Q8K290</accession>
<accession>Q8K3G8</accession>
<accession>Q9CTE3</accession>
<organism>
    <name type="scientific">Mus musculus</name>
    <name type="common">Mouse</name>
    <dbReference type="NCBI Taxonomy" id="10090"/>
    <lineage>
        <taxon>Eukaryota</taxon>
        <taxon>Metazoa</taxon>
        <taxon>Chordata</taxon>
        <taxon>Craniata</taxon>
        <taxon>Vertebrata</taxon>
        <taxon>Euteleostomi</taxon>
        <taxon>Mammalia</taxon>
        <taxon>Eutheria</taxon>
        <taxon>Euarchontoglires</taxon>
        <taxon>Glires</taxon>
        <taxon>Rodentia</taxon>
        <taxon>Myomorpha</taxon>
        <taxon>Muroidea</taxon>
        <taxon>Muridae</taxon>
        <taxon>Murinae</taxon>
        <taxon>Mus</taxon>
        <taxon>Mus</taxon>
    </lineage>
</organism>
<reference key="1">
    <citation type="journal article" date="2003" name="J. Mol. Biol.">
        <title>Genomic structure and functional characterisation of the promoters of human and mouse nogo/rtn4.</title>
        <authorList>
            <person name="Oertle T."/>
            <person name="Huber C."/>
            <person name="van der Putten H."/>
            <person name="Schwab M.E."/>
        </authorList>
    </citation>
    <scope>NUCLEOTIDE SEQUENCE [GENOMIC DNA / MRNA] (ISOFORMS A; B; B2; C AND D)</scope>
    <scope>ALTERNATIVE SPLICING</scope>
    <source>
        <strain>129/Sv</strain>
    </source>
</reference>
<reference key="2">
    <citation type="submission" date="2000-12" db="EMBL/GenBank/DDBJ databases">
        <title>Mouse vp20/RTN4C cDNA.</title>
        <authorList>
            <person name="Coulson A.C."/>
            <person name="Craggs P.D."/>
            <person name="Morris N.J."/>
        </authorList>
    </citation>
    <scope>NUCLEOTIDE SEQUENCE [MRNA] (ISOFORM C)</scope>
    <source>
        <tissue>Adipocyte</tissue>
    </source>
</reference>
<reference key="3">
    <citation type="submission" date="2002-05" db="EMBL/GenBank/DDBJ databases">
        <title>Cloning and expression of the mouse Nogo-A protein.</title>
        <authorList>
            <person name="Jin W."/>
            <person name="Long M."/>
            <person name="Li R."/>
            <person name="Ju G."/>
        </authorList>
    </citation>
    <scope>NUCLEOTIDE SEQUENCE [MRNA] (ISOFORM A)</scope>
    <source>
        <strain>BALB/cJ</strain>
    </source>
</reference>
<reference key="4">
    <citation type="submission" date="2005-02" db="EMBL/GenBank/DDBJ databases">
        <title>Prediction of the coding sequences of mouse homologues of KIAA gene. The complete nucleotide sequences of mouse KIAA-homologous cDNAs identified by screening of terminal sequences of cDNA clones randomly sampled from size-fractionated libraries.</title>
        <authorList>
            <person name="Okazaki N."/>
            <person name="Kikuno R.F."/>
            <person name="Ohara R."/>
            <person name="Inamoto S."/>
            <person name="Nagase T."/>
            <person name="Ohara O."/>
            <person name="Koga H."/>
        </authorList>
    </citation>
    <scope>NUCLEOTIDE SEQUENCE [LARGE SCALE MRNA] (ISOFORM A)</scope>
    <source>
        <tissue>Fetal brain</tissue>
    </source>
</reference>
<reference key="5">
    <citation type="submission" date="2005-09" db="EMBL/GenBank/DDBJ databases">
        <authorList>
            <person name="Mural R.J."/>
            <person name="Adams M.D."/>
            <person name="Myers E.W."/>
            <person name="Smith H.O."/>
            <person name="Venter J.C."/>
        </authorList>
    </citation>
    <scope>NUCLEOTIDE SEQUENCE [LARGE SCALE GENOMIC DNA]</scope>
</reference>
<reference key="6">
    <citation type="journal article" date="2009" name="PLoS Biol.">
        <title>Lineage-specific biology revealed by a finished genome assembly of the mouse.</title>
        <authorList>
            <person name="Church D.M."/>
            <person name="Goodstadt L."/>
            <person name="Hillier L.W."/>
            <person name="Zody M.C."/>
            <person name="Goldstein S."/>
            <person name="She X."/>
            <person name="Bult C.J."/>
            <person name="Agarwala R."/>
            <person name="Cherry J.L."/>
            <person name="DiCuccio M."/>
            <person name="Hlavina W."/>
            <person name="Kapustin Y."/>
            <person name="Meric P."/>
            <person name="Maglott D."/>
            <person name="Birtle Z."/>
            <person name="Marques A.C."/>
            <person name="Graves T."/>
            <person name="Zhou S."/>
            <person name="Teague B."/>
            <person name="Potamousis K."/>
            <person name="Churas C."/>
            <person name="Place M."/>
            <person name="Herschleb J."/>
            <person name="Runnheim R."/>
            <person name="Forrest D."/>
            <person name="Amos-Landgraf J."/>
            <person name="Schwartz D.C."/>
            <person name="Cheng Z."/>
            <person name="Lindblad-Toh K."/>
            <person name="Eichler E.E."/>
            <person name="Ponting C.P."/>
        </authorList>
    </citation>
    <scope>NUCLEOTIDE SEQUENCE [LARGE SCALE GENOMIC DNA]</scope>
    <source>
        <strain>C57BL/6J</strain>
    </source>
</reference>
<reference key="7">
    <citation type="journal article" date="2004" name="Genome Res.">
        <title>The status, quality, and expansion of the NIH full-length cDNA project: the Mammalian Gene Collection (MGC).</title>
        <authorList>
            <consortium name="The MGC Project Team"/>
        </authorList>
    </citation>
    <scope>NUCLEOTIDE SEQUENCE [LARGE SCALE MRNA] (ISOFORM A)</scope>
    <source>
        <strain>C57BL/6J</strain>
        <tissue>Brain</tissue>
        <tissue>Mammary gland</tissue>
    </source>
</reference>
<reference key="8">
    <citation type="submission" date="2001-10" db="EMBL/GenBank/DDBJ databases">
        <title>The partial sequence of mouse nogo-A cDNA clone#4109.</title>
        <authorList>
            <person name="Tozaki H."/>
            <person name="Hirata T."/>
        </authorList>
    </citation>
    <scope>NUCLEOTIDE SEQUENCE [MRNA] OF 585-1162</scope>
</reference>
<reference key="9">
    <citation type="submission" date="2007-04" db="UniProtKB">
        <authorList>
            <person name="Lubec G."/>
            <person name="Kang S.U."/>
        </authorList>
    </citation>
    <scope>PROTEIN SEQUENCE OF 975-982; 1061-1074 AND 1079-1090</scope>
    <scope>IDENTIFICATION BY MASS SPECTROMETRY</scope>
    <source>
        <strain>C57BL/6J</strain>
        <tissue>Brain</tissue>
    </source>
</reference>
<reference key="10">
    <citation type="journal article" date="2005" name="Science">
        <title>The transcriptional landscape of the mammalian genome.</title>
        <authorList>
            <person name="Carninci P."/>
            <person name="Kasukawa T."/>
            <person name="Katayama S."/>
            <person name="Gough J."/>
            <person name="Frith M.C."/>
            <person name="Maeda N."/>
            <person name="Oyama R."/>
            <person name="Ravasi T."/>
            <person name="Lenhard B."/>
            <person name="Wells C."/>
            <person name="Kodzius R."/>
            <person name="Shimokawa K."/>
            <person name="Bajic V.B."/>
            <person name="Brenner S.E."/>
            <person name="Batalov S."/>
            <person name="Forrest A.R."/>
            <person name="Zavolan M."/>
            <person name="Davis M.J."/>
            <person name="Wilming L.G."/>
            <person name="Aidinis V."/>
            <person name="Allen J.E."/>
            <person name="Ambesi-Impiombato A."/>
            <person name="Apweiler R."/>
            <person name="Aturaliya R.N."/>
            <person name="Bailey T.L."/>
            <person name="Bansal M."/>
            <person name="Baxter L."/>
            <person name="Beisel K.W."/>
            <person name="Bersano T."/>
            <person name="Bono H."/>
            <person name="Chalk A.M."/>
            <person name="Chiu K.P."/>
            <person name="Choudhary V."/>
            <person name="Christoffels A."/>
            <person name="Clutterbuck D.R."/>
            <person name="Crowe M.L."/>
            <person name="Dalla E."/>
            <person name="Dalrymple B.P."/>
            <person name="de Bono B."/>
            <person name="Della Gatta G."/>
            <person name="di Bernardo D."/>
            <person name="Down T."/>
            <person name="Engstrom P."/>
            <person name="Fagiolini M."/>
            <person name="Faulkner G."/>
            <person name="Fletcher C.F."/>
            <person name="Fukushima T."/>
            <person name="Furuno M."/>
            <person name="Futaki S."/>
            <person name="Gariboldi M."/>
            <person name="Georgii-Hemming P."/>
            <person name="Gingeras T.R."/>
            <person name="Gojobori T."/>
            <person name="Green R.E."/>
            <person name="Gustincich S."/>
            <person name="Harbers M."/>
            <person name="Hayashi Y."/>
            <person name="Hensch T.K."/>
            <person name="Hirokawa N."/>
            <person name="Hill D."/>
            <person name="Huminiecki L."/>
            <person name="Iacono M."/>
            <person name="Ikeo K."/>
            <person name="Iwama A."/>
            <person name="Ishikawa T."/>
            <person name="Jakt M."/>
            <person name="Kanapin A."/>
            <person name="Katoh M."/>
            <person name="Kawasawa Y."/>
            <person name="Kelso J."/>
            <person name="Kitamura H."/>
            <person name="Kitano H."/>
            <person name="Kollias G."/>
            <person name="Krishnan S.P."/>
            <person name="Kruger A."/>
            <person name="Kummerfeld S.K."/>
            <person name="Kurochkin I.V."/>
            <person name="Lareau L.F."/>
            <person name="Lazarevic D."/>
            <person name="Lipovich L."/>
            <person name="Liu J."/>
            <person name="Liuni S."/>
            <person name="McWilliam S."/>
            <person name="Madan Babu M."/>
            <person name="Madera M."/>
            <person name="Marchionni L."/>
            <person name="Matsuda H."/>
            <person name="Matsuzawa S."/>
            <person name="Miki H."/>
            <person name="Mignone F."/>
            <person name="Miyake S."/>
            <person name="Morris K."/>
            <person name="Mottagui-Tabar S."/>
            <person name="Mulder N."/>
            <person name="Nakano N."/>
            <person name="Nakauchi H."/>
            <person name="Ng P."/>
            <person name="Nilsson R."/>
            <person name="Nishiguchi S."/>
            <person name="Nishikawa S."/>
            <person name="Nori F."/>
            <person name="Ohara O."/>
            <person name="Okazaki Y."/>
            <person name="Orlando V."/>
            <person name="Pang K.C."/>
            <person name="Pavan W.J."/>
            <person name="Pavesi G."/>
            <person name="Pesole G."/>
            <person name="Petrovsky N."/>
            <person name="Piazza S."/>
            <person name="Reed J."/>
            <person name="Reid J.F."/>
            <person name="Ring B.Z."/>
            <person name="Ringwald M."/>
            <person name="Rost B."/>
            <person name="Ruan Y."/>
            <person name="Salzberg S.L."/>
            <person name="Sandelin A."/>
            <person name="Schneider C."/>
            <person name="Schoenbach C."/>
            <person name="Sekiguchi K."/>
            <person name="Semple C.A."/>
            <person name="Seno S."/>
            <person name="Sessa L."/>
            <person name="Sheng Y."/>
            <person name="Shibata Y."/>
            <person name="Shimada H."/>
            <person name="Shimada K."/>
            <person name="Silva D."/>
            <person name="Sinclair B."/>
            <person name="Sperling S."/>
            <person name="Stupka E."/>
            <person name="Sugiura K."/>
            <person name="Sultana R."/>
            <person name="Takenaka Y."/>
            <person name="Taki K."/>
            <person name="Tammoja K."/>
            <person name="Tan S.L."/>
            <person name="Tang S."/>
            <person name="Taylor M.S."/>
            <person name="Tegner J."/>
            <person name="Teichmann S.A."/>
            <person name="Ueda H.R."/>
            <person name="van Nimwegen E."/>
            <person name="Verardo R."/>
            <person name="Wei C.L."/>
            <person name="Yagi K."/>
            <person name="Yamanishi H."/>
            <person name="Zabarovsky E."/>
            <person name="Zhu S."/>
            <person name="Zimmer A."/>
            <person name="Hide W."/>
            <person name="Bult C."/>
            <person name="Grimmond S.M."/>
            <person name="Teasdale R.D."/>
            <person name="Liu E.T."/>
            <person name="Brusic V."/>
            <person name="Quackenbush J."/>
            <person name="Wahlestedt C."/>
            <person name="Mattick J.S."/>
            <person name="Hume D.A."/>
            <person name="Kai C."/>
            <person name="Sasaki D."/>
            <person name="Tomaru Y."/>
            <person name="Fukuda S."/>
            <person name="Kanamori-Katayama M."/>
            <person name="Suzuki M."/>
            <person name="Aoki J."/>
            <person name="Arakawa T."/>
            <person name="Iida J."/>
            <person name="Imamura K."/>
            <person name="Itoh M."/>
            <person name="Kato T."/>
            <person name="Kawaji H."/>
            <person name="Kawagashira N."/>
            <person name="Kawashima T."/>
            <person name="Kojima M."/>
            <person name="Kondo S."/>
            <person name="Konno H."/>
            <person name="Nakano K."/>
            <person name="Ninomiya N."/>
            <person name="Nishio T."/>
            <person name="Okada M."/>
            <person name="Plessy C."/>
            <person name="Shibata K."/>
            <person name="Shiraki T."/>
            <person name="Suzuki S."/>
            <person name="Tagami M."/>
            <person name="Waki K."/>
            <person name="Watahiki A."/>
            <person name="Okamura-Oho Y."/>
            <person name="Suzuki H."/>
            <person name="Kawai J."/>
            <person name="Hayashizaki Y."/>
        </authorList>
    </citation>
    <scope>NUCLEOTIDE SEQUENCE [LARGE SCALE MRNA] OF 1133-1162</scope>
    <source>
        <strain>C57BL/6J</strain>
        <tissue>Embryo</tissue>
    </source>
</reference>
<reference key="11">
    <citation type="journal article" date="2002" name="J. Neurochem.">
        <title>Identification and characterization of a novel Nogo-interacting mitochondrial protein (NIMP).</title>
        <authorList>
            <person name="Hu W.-H."/>
            <person name="Hausmann O.N."/>
            <person name="Yan M.-S."/>
            <person name="Walters W.M."/>
            <person name="Wong P.K.Y."/>
            <person name="Bethea J.R."/>
        </authorList>
    </citation>
    <scope>INTERACTION WITH RTN4IP1</scope>
</reference>
<reference key="12">
    <citation type="journal article" date="2004" name="Mol. Cell. Proteomics">
        <title>Phosphoproteomic analysis of the developing mouse brain.</title>
        <authorList>
            <person name="Ballif B.A."/>
            <person name="Villen J."/>
            <person name="Beausoleil S.A."/>
            <person name="Schwartz D."/>
            <person name="Gygi S.P."/>
        </authorList>
    </citation>
    <scope>PHOSPHORYLATION [LARGE SCALE ANALYSIS] AT SER-145 AND SER-690</scope>
    <scope>IDENTIFICATION BY MASS SPECTROMETRY [LARGE SCALE ANALYSIS]</scope>
    <source>
        <tissue>Embryonic brain</tissue>
    </source>
</reference>
<reference key="13">
    <citation type="journal article" date="2004" name="Nat. Med.">
        <title>A new role for Nogo as a regulator of vascular remodeling.</title>
        <authorList>
            <person name="Acevedo L."/>
            <person name="Yu J."/>
            <person name="Erdjument-Bromage H."/>
            <person name="Miao R.Q."/>
            <person name="Kim J.E."/>
            <person name="Fulton D."/>
            <person name="Tempst P."/>
            <person name="Strittmatter S.M."/>
            <person name="Sessa W.C."/>
        </authorList>
    </citation>
    <scope>FUNCTION (ISOFORMS A AND B)</scope>
    <scope>DISRUPTION PHENOTYPE (ISOFORMS A AND B)</scope>
    <scope>TISSUE SPECIFICITY</scope>
</reference>
<reference key="14">
    <citation type="journal article" date="2006" name="Mol. Cell. Proteomics">
        <title>Comprehensive identification of phosphorylation sites in postsynaptic density preparations.</title>
        <authorList>
            <person name="Trinidad J.C."/>
            <person name="Specht C.G."/>
            <person name="Thalhammer A."/>
            <person name="Schoepfer R."/>
            <person name="Burlingame A.L."/>
        </authorList>
    </citation>
    <scope>IDENTIFICATION BY MASS SPECTROMETRY [LARGE SCALE ANALYSIS]</scope>
    <source>
        <tissue>Brain</tissue>
    </source>
</reference>
<reference key="15">
    <citation type="journal article" date="2007" name="Mol. Cell. Proteomics">
        <title>Qualitative and quantitative analyses of protein phosphorylation in naive and stimulated mouse synaptosomal preparations.</title>
        <authorList>
            <person name="Munton R.P."/>
            <person name="Tweedie-Cullen R."/>
            <person name="Livingstone-Zatchej M."/>
            <person name="Weinandy F."/>
            <person name="Waidelich M."/>
            <person name="Longo D."/>
            <person name="Gehrig P."/>
            <person name="Potthast F."/>
            <person name="Rutishauser D."/>
            <person name="Gerrits B."/>
            <person name="Panse C."/>
            <person name="Schlapbach R."/>
            <person name="Mansuy I.M."/>
        </authorList>
    </citation>
    <scope>IDENTIFICATION BY MASS SPECTROMETRY [LARGE SCALE ANALYSIS]</scope>
    <source>
        <tissue>Brain cortex</tissue>
    </source>
</reference>
<reference key="16">
    <citation type="journal article" date="2007" name="Proc. Natl. Acad. Sci. U.S.A.">
        <title>Large-scale phosphorylation analysis of mouse liver.</title>
        <authorList>
            <person name="Villen J."/>
            <person name="Beausoleil S.A."/>
            <person name="Gerber S.A."/>
            <person name="Gygi S.P."/>
        </authorList>
    </citation>
    <scope>ACETYLATION [LARGE SCALE ANALYSIS] AT MET-1</scope>
    <scope>IDENTIFICATION BY MASS SPECTROMETRY [LARGE SCALE ANALYSIS]</scope>
    <source>
        <tissue>Liver</tissue>
    </source>
</reference>
<reference key="17">
    <citation type="journal article" date="2009" name="Immunity">
        <title>The phagosomal proteome in interferon-gamma-activated macrophages.</title>
        <authorList>
            <person name="Trost M."/>
            <person name="English L."/>
            <person name="Lemieux S."/>
            <person name="Courcelles M."/>
            <person name="Desjardins M."/>
            <person name="Thibault P."/>
        </authorList>
    </citation>
    <scope>PHOSPHORYLATION [LARGE SCALE ANALYSIS] AT SER-145; SER-344 AND SER-489</scope>
    <scope>IDENTIFICATION BY MASS SPECTROMETRY [LARGE SCALE ANALYSIS]</scope>
</reference>
<reference key="18">
    <citation type="journal article" date="2009" name="Mol. Cell. Proteomics">
        <title>Large scale localization of protein phosphorylation by use of electron capture dissociation mass spectrometry.</title>
        <authorList>
            <person name="Sweet S.M."/>
            <person name="Bailey C.M."/>
            <person name="Cunningham D.L."/>
            <person name="Heath J.K."/>
            <person name="Cooper H.J."/>
        </authorList>
    </citation>
    <scope>PHOSPHORYLATION [LARGE SCALE ANALYSIS] AT SER-16 AND SER-105</scope>
    <scope>IDENTIFICATION BY MASS SPECTROMETRY [LARGE SCALE ANALYSIS]</scope>
    <source>
        <tissue>Embryonic fibroblast</tissue>
    </source>
</reference>
<reference key="19">
    <citation type="journal article" date="2009" name="Proc. Natl. Acad. Sci. U.S.A.">
        <title>Reticulon 4B (Nogo-B) is necessary for macrophage infiltration and tissue repair.</title>
        <authorList>
            <person name="Yu J."/>
            <person name="Fernandez-Hernando C."/>
            <person name="Suarez Y."/>
            <person name="Schleicher M."/>
            <person name="Hao Z."/>
            <person name="Wright P.L."/>
            <person name="DiLorenzo A."/>
            <person name="Kyriakides T.R."/>
            <person name="Sessa W.C."/>
        </authorList>
    </citation>
    <scope>FUNCTION (ISOFORM B)</scope>
    <scope>DISRUPTION PHENOTYPE</scope>
    <scope>INDUCTION BY ISCHEMIA (ISOFORMS B AND B2)</scope>
</reference>
<reference key="20">
    <citation type="journal article" date="2010" name="Cell">
        <title>A tissue-specific atlas of mouse protein phosphorylation and expression.</title>
        <authorList>
            <person name="Huttlin E.L."/>
            <person name="Jedrychowski M.P."/>
            <person name="Elias J.E."/>
            <person name="Goswami T."/>
            <person name="Rad R."/>
            <person name="Beausoleil S.A."/>
            <person name="Villen J."/>
            <person name="Haas W."/>
            <person name="Sowa M.E."/>
            <person name="Gygi S.P."/>
        </authorList>
    </citation>
    <scope>PHOSPHORYLATION [LARGE SCALE ANALYSIS] AT SER-165; SER-167; SER-344; THR-348; SER-489; SER-690; SER-727; SER-768 AND SER-857</scope>
    <scope>IDENTIFICATION BY MASS SPECTROMETRY [LARGE SCALE ANALYSIS]</scope>
    <source>
        <tissue>Brain</tissue>
        <tissue>Brown adipose tissue</tissue>
        <tissue>Heart</tissue>
        <tissue>Kidney</tissue>
        <tissue>Liver</tissue>
        <tissue>Lung</tissue>
        <tissue>Pancreas</tissue>
        <tissue>Spleen</tissue>
        <tissue>Testis</tissue>
    </source>
</reference>
<reference key="21">
    <citation type="journal article" date="2010" name="Cereb. Cortex">
        <title>Nogo-a regulates neural precursor migration in the embryonic mouse cortex.</title>
        <authorList>
            <person name="Mathis C."/>
            <person name="Schroeter A."/>
            <person name="Thallmair M."/>
            <person name="Schwab M.E."/>
        </authorList>
    </citation>
    <scope>FUNCTION (ISOFORM A)</scope>
    <scope>DISRUPTION PHENOTYPE (ISOFORM A)</scope>
    <scope>DEVELOPMENTAL STAGE (ISOFORM A)</scope>
</reference>
<reference key="22">
    <citation type="journal article" date="2010" name="Development">
        <title>Neuronal Nogo-A regulates neurite fasciculation, branching and extension in the developing nervous system.</title>
        <authorList>
            <person name="Petrinovic M.M."/>
            <person name="Duncan C.S."/>
            <person name="Bourikas D."/>
            <person name="Weinman O."/>
            <person name="Montani L."/>
            <person name="Schroeter A."/>
            <person name="Maerki D."/>
            <person name="Sommer L."/>
            <person name="Stoeckli E.T."/>
            <person name="Schwab M.E."/>
        </authorList>
    </citation>
    <scope>FUNCTION (ISOFORM A)</scope>
    <scope>DISRUPTION PHENOTYPE (ISOFORM A)</scope>
</reference>
<reference key="23">
    <citation type="journal article" date="2011" name="Blood">
        <title>Endothelial reticulon-4B (Nogo-B) regulates ICAM-1-mediated leukocyte transmigration and acute inflammation.</title>
        <authorList>
            <person name="Di Lorenzo A."/>
            <person name="Manes T.D."/>
            <person name="Davalos A."/>
            <person name="Wright P.L."/>
            <person name="Sessa W.C."/>
        </authorList>
    </citation>
    <scope>FUNCTION (ISOFORM B)</scope>
    <scope>DISRUPTION PHENOTYPE (ISOFORMS A AND B)</scope>
</reference>
<reference key="24">
    <citation type="journal article" date="2013" name="Hepatology">
        <title>Reticulon 4B (Nogo-B) facilitates hepatocyte proliferation and liver regeneration in mice.</title>
        <authorList>
            <person name="Gao L."/>
            <person name="Utsumi T."/>
            <person name="Tashiro K."/>
            <person name="Liu B."/>
            <person name="Zhang D."/>
            <person name="Swenson E.S."/>
            <person name="Iwakiri Y."/>
        </authorList>
    </citation>
    <scope>FUNCTION (ISOFORM B)</scope>
    <scope>DEVELOPMENTAL STAGE</scope>
</reference>
<reference key="25">
    <citation type="journal article" date="2013" name="Proc. Natl. Acad. Sci. U.S.A.">
        <title>Nogo-A is a negative regulator of CNS angiogenesis.</title>
        <authorList>
            <person name="Waelchli T."/>
            <person name="Pernet V."/>
            <person name="Weinmann O."/>
            <person name="Shiu J.Y."/>
            <person name="Guzik-Kornacka A."/>
            <person name="Decrey G."/>
            <person name="Yueksel D."/>
            <person name="Schneider H."/>
            <person name="Vogel J."/>
            <person name="Ingber D.E."/>
            <person name="Vogel V."/>
            <person name="Frei K."/>
            <person name="Schwab M.E."/>
        </authorList>
    </citation>
    <scope>FUNCTION (ISOFORM A)</scope>
    <scope>DISRUPTION PHENOTYPE</scope>
    <scope>TISSUE SPECIFICITY</scope>
    <scope>DEVELOPMENTAL STAGE</scope>
</reference>
<reference key="26">
    <citation type="journal article" date="2015" name="J. Immunol.">
        <title>Endoplasmic Protein Nogo-B (RTN4-B) Interacts with GRAMD4 and Regulates TLR9-Mediated Innate Immune Responses.</title>
        <authorList>
            <person name="Kimura T."/>
            <person name="Endo S."/>
            <person name="Inui M."/>
            <person name="Saitoh S."/>
            <person name="Miyake K."/>
            <person name="Takai T."/>
        </authorList>
    </citation>
    <scope>FUNCTION (ISOFORM B)</scope>
    <scope>DISRUPTION PHENOTYPE (ISOFORMS A AND B)</scope>
    <scope>TISSUE SPECIFICITY (ISOFORMS B AND B2)</scope>
    <scope>INTERACTION WITH GRAMD4 (ISOFORM B)</scope>
    <scope>SUBCELLULAR LOCATION (ISOFORM B)</scope>
</reference>
<reference key="27">
    <citation type="journal article" date="2015" name="Nat. Med.">
        <title>Nogo-B regulates endothelial sphingolipid homeostasis to control vascular function and blood pressure.</title>
        <authorList>
            <person name="Cantalupo A."/>
            <person name="Zhang Y."/>
            <person name="Kothiya M."/>
            <person name="Galvani S."/>
            <person name="Obinata H."/>
            <person name="Bucci M."/>
            <person name="Giordano F.J."/>
            <person name="Jiang X.C."/>
            <person name="Hla T."/>
            <person name="Di Lorenzo A."/>
        </authorList>
    </citation>
    <scope>FUNCTION (ISOFORM B)</scope>
    <scope>SUBCELLULAR LOCATION (ISOFORM B)</scope>
    <scope>INTERACTION WITH SPTLC1</scope>
    <scope>DISRUPTION PHENOTYPE</scope>
    <scope>TISSUE SPECIFICITY (ISOFORM B)</scope>
</reference>
<reference key="28">
    <citation type="journal article" date="2015" name="Sci. Rep.">
        <title>Nogo-B protects mice against lipopolysaccharide-induced acute lung injury.</title>
        <authorList>
            <person name="Xu W."/>
            <person name="Zhu Y."/>
            <person name="Ning Y."/>
            <person name="Dong Y."/>
            <person name="Huang H."/>
            <person name="Zhang W."/>
            <person name="Sun Q."/>
            <person name="Li Q."/>
        </authorList>
    </citation>
    <scope>FUNCTION (ISOFORM B)</scope>
    <scope>INDUCTION BY LPS (ISOFORM B)</scope>
    <scope>TISSUE SPECIFICITY (ISOFORM B)</scope>
</reference>
<reference key="29">
    <citation type="journal article" date="2016" name="Cell Death Dis.">
        <title>Nogo-C regulates cardiomyocyte apoptosis during mouse myocardial infarction.</title>
        <authorList>
            <person name="Jia S."/>
            <person name="Qiao X."/>
            <person name="Ye J."/>
            <person name="Fang X."/>
            <person name="Xu C."/>
            <person name="Cao Y."/>
            <person name="Zheng M."/>
        </authorList>
    </citation>
    <scope>FUNCTION (ISOFORM C)</scope>
    <scope>DISRUPTION PHENOTYPE (ISOFORM C)</scope>
    <scope>TISSUE SPECIFICITY (ISOFORM C)</scope>
    <scope>INDUCTION BY HYPOXIA</scope>
</reference>
<reference key="30">
    <citation type="journal article" date="2016" name="Sci. Rep.">
        <title>NOGO-A/RTN4A and NOGO-B/RTN4B are simultaneously expressed in epithelial, fibroblast and neuronal cells and maintain ER morphology.</title>
        <authorList>
            <person name="Raemoe O."/>
            <person name="Kumar D."/>
            <person name="Gucciardo E."/>
            <person name="Joensuu M."/>
            <person name="Saarekas M."/>
            <person name="Vihinen H."/>
            <person name="Belevich I."/>
            <person name="Smolander O.P."/>
            <person name="Qian K."/>
            <person name="Auvinen P."/>
            <person name="Jokitalo E."/>
        </authorList>
    </citation>
    <scope>FUNCTION (ISOFORM 2)</scope>
    <scope>SUBCELLULAR LOCATION (ISOFORMS A AND B)</scope>
    <scope>TISSUE SPECIFICITY (ISOFORMS A; B AND C)</scope>
</reference>
<reference key="31">
    <citation type="journal article" date="2020" name="Nat. Commun.">
        <title>REEP5 depletion causes sarco-endoplasmic reticulum vacuolization and cardiac functional defects.</title>
        <authorList>
            <person name="Lee S.H."/>
            <person name="Hadipour-Lakmehsari S."/>
            <person name="Murthy H.R."/>
            <person name="Gibb N."/>
            <person name="Miyake T."/>
            <person name="Teng A.C.T."/>
            <person name="Cosme J."/>
            <person name="Yu J.C."/>
            <person name="Moon M."/>
            <person name="Lim S."/>
            <person name="Wong V."/>
            <person name="Liu P."/>
            <person name="Billia F."/>
            <person name="Fernandez-Gonzalez R."/>
            <person name="Stagljar I."/>
            <person name="Sharma P."/>
            <person name="Kislinger T."/>
            <person name="Scott I.C."/>
            <person name="Gramolini A.O."/>
        </authorList>
    </citation>
    <scope>INTERACTION WITH REEP5</scope>
    <scope>SUBCELLULAR LOCATION</scope>
    <scope>TISSUE SPECIFICITY (ISOFORMS A AND B)</scope>
</reference>
<reference key="32">
    <citation type="journal article" date="2022" name="PLoS ONE">
        <title>An Rtn4/Nogo-A-interacting micropeptide modulates synaptic plasticity with age.</title>
        <authorList>
            <person name="Kragness S."/>
            <person name="Clark Z."/>
            <person name="Mullin A."/>
            <person name="Guidry J."/>
            <person name="Earls L.R."/>
        </authorList>
    </citation>
    <scope>INTERACTION WITH PANTS</scope>
    <scope>SUBCELLULAR LOCATION</scope>
</reference>
<comment type="function">
    <text evidence="2">Required to induce the formation and stabilization of endoplasmic reticulum (ER) tubules. They regulate membrane morphogenesis in the ER by promoting tubular ER production. They influence nuclear envelope expansion, nuclear pore complex formation and proper localization of inner nuclear membrane proteins. However each isoform have specific functions mainly depending on their tissue expression specificities.</text>
</comment>
<comment type="function">
    <molecule>Isoform A</molecule>
    <text evidence="2 10 13">Developmental neurite growth regulatory factor with a role as a negative regulator of axon-axon adhesion and growth, and as a facilitator of neurite branching. Regulates neurite fasciculation, branching and extension in the developing nervous system (PubMed:20573699). Involved in down-regulation of growth, stabilization of wiring and restriction of plasticity in the adult CNS (By similarity). Regulates the radial migration of cortical neurons via an RTN4R-LINGO1 containing receptor complex (PubMed:20573699). Acts as a negative regulator of central nervous system angiogenesis. Inhibits spreading, migration and sprouting of primary brain microvascular endothelial cells (MVECs). Also induces the retraction of MVECs lamellipodia and filopodia in a ROCK pathway-dependent manner (PubMed:23625008).</text>
</comment>
<comment type="function">
    <molecule>Isoform B</molecule>
    <text evidence="2 7 8 11 12 14 15 16 24">Mainly function in endothelial cells and vascular smooth muscle cells, is also involved in immune system regulation (Probable). Modulator of vascular remodeling, promotes the migration of endothelial cells but inhibits the migration of vascular smooth muscle cells (PubMed:15034570). Regulates endothelial sphingolipid biosynthesis with direct effects on vascular function and blood pressure. Inhibits serine palmitoyltransferase, SPTLC1, the rate-limiting enzyme of the novo sphingolipid biosynthetic pathway, thereby controlling production of endothelial sphingosine-1-phosphate (S1P) (PubMed:26301690). Required to promote macrophage homing and functions such as cytokine/chemokine gene expression involved in angiogenesis, arteriogenesis and tissue repair (PubMed:19805174). Mediates ICAM1 induced transendothelial migration of leukocytes such as monocytes and neutrophils and acute inflammation (PubMed:21183689). Necessary for immune responses triggered by nucleic acid sensing TLRs, such as TLR9, is required for proper TLR9 location to endolysosomes (PubMed:25917084). Also involved in immune response to LPS (PubMed:26174362). Plays a role in liver regeneration through the modulation of hepatocytes proliferation (PubMed:23299899). Reduces the anti-apoptotic activity of Bcl-xl and Bcl-2. This is likely consecutive to their change in subcellular location, from the mitochondria to the endoplasmic reticulum, after binding and sequestration. With isoform C, inhibits BACE1 activity and amyloid precursor protein processing (By similarity).</text>
</comment>
<comment type="function">
    <molecule>Isoform C</molecule>
    <text evidence="2 17">Regulates cardiomyocyte apoptosis upon hypoxic conditions (PubMed:27763637). With isoform B, inhibits BACE1 activity and amyloid precursor protein processing (By similarity).</text>
</comment>
<comment type="subunit">
    <text evidence="2 6">Binds to RTN4R (By similarity). Interacts with ATL1 (By similarity). Interacts with TMEM170A (By similarity). Interacts with RTN4IP1 (PubMed:12067236).</text>
</comment>
<comment type="subunit">
    <molecule>Isoform A</molecule>
    <text evidence="1 19">Interacts in trans with CNTNAP1 (By similarity). Interacts with REEP5 (PubMed:32075961). Interacts with GPR50 (By similarity). Interacts with synaptic plasticity regulator PANTS; the interaction results in enhanced RTN4-mediated inhibition of AMPA receptor clustering (PubMed:35771867).</text>
</comment>
<comment type="subunit">
    <molecule>Isoform B</molecule>
    <text evidence="2 14 16 19">Homodimer (By similarity). Interacts with BAD/Bcl-xl and BCL2. Interact with RTN3 (By similarity). Interacts with NGBR (By similarity). Interacts with SPTLC1 (PubMed:26301690). Interacts with GRAMD4 (PubMed:25917084). Interacts with CDH5 (By similarity). Interacts with BACE1 and BACE2 (By similarity). Interacts with REEP5 (PubMed:32075961). Interacts with RETREG3 (By similarity).</text>
</comment>
<comment type="subunit">
    <molecule>Isoform C</molecule>
    <text evidence="2">Interacts with BACE1 and BACE2 (By similarity). Interacts with TMEM33 (By similarity).</text>
</comment>
<comment type="interaction">
    <interactant intactId="EBI-3869532">
        <id>Q99P72</id>
    </interactant>
    <interactant intactId="EBI-8314699">
        <id>P48722</id>
        <label>Hspa4l</label>
    </interactant>
    <organismsDiffer>false</organismsDiffer>
    <experiments>4</experiments>
</comment>
<comment type="interaction">
    <interactant intactId="EBI-3869532">
        <id>Q99P72</id>
    </interactant>
    <interactant intactId="EBI-16091339">
        <id>P52592</id>
        <label>S1pr2</label>
    </interactant>
    <organismsDiffer>false</organismsDiffer>
    <experiments>2</experiments>
</comment>
<comment type="subcellular location">
    <molecule>Isoform A</molecule>
    <subcellularLocation>
        <location evidence="18 19">Endoplasmic reticulum membrane</location>
        <topology evidence="3">Multi-pass membrane protein</topology>
    </subcellularLocation>
    <subcellularLocation>
        <location evidence="2">Cell membrane</location>
        <topology evidence="3">Multi-pass membrane protein</topology>
        <orientation evidence="2">Cytoplasmic side</orientation>
    </subcellularLocation>
    <subcellularLocation>
        <location evidence="20">Synapse</location>
    </subcellularLocation>
    <text evidence="2">Anchored to the membrane of the endoplasmic reticulum (ER) through 2 putative transmembrane domains. Localizes throughout the ER tubular network. Co-localizes with TMEM33 at the ER sheets.</text>
</comment>
<comment type="subcellular location">
    <molecule>Isoform B</molecule>
    <subcellularLocation>
        <location evidence="14 18 19">Endoplasmic reticulum membrane</location>
        <topology evidence="3">Multi-pass membrane protein</topology>
    </subcellularLocation>
    <subcellularLocation>
        <location evidence="2">Cell membrane</location>
        <topology evidence="3">Multi-pass membrane protein</topology>
        <orientation evidence="2">Extracellular side</orientation>
    </subcellularLocation>
    <subcellularLocation>
        <location evidence="2">Cell junction</location>
    </subcellularLocation>
    <text evidence="2 18">Mainly located on endoplasmic reticulum tubules and sheet edges (PubMed:27786289). Upon ICAM1 engagement, redistributed toward endothelial junctions where interacts with CDH5 (By similarity).</text>
</comment>
<comment type="subcellular location">
    <molecule>Isoform C</molecule>
    <subcellularLocation>
        <location evidence="2">Endoplasmic reticulum membrane</location>
        <topology evidence="3">Multi-pass membrane protein</topology>
    </subcellularLocation>
</comment>
<comment type="alternative products">
    <event type="alternative splicing"/>
    <isoform>
        <id>Q99P72-2</id>
        <name>A</name>
        <name evidence="21 22">RTN4A</name>
        <name evidence="21 22">Nogo-A</name>
        <name evidence="2">RTN-xL</name>
        <sequence type="displayed"/>
    </isoform>
    <isoform>
        <id>Q99P72-3</id>
        <name>D</name>
        <name evidence="21 22">RTN4D</name>
        <name evidence="21 22">Nogo-D</name>
        <sequence type="described" ref="VSP_018089 VSP_018090"/>
    </isoform>
    <isoform>
        <id>Q99P72-1</id>
        <name>C</name>
        <name evidence="21 22">RTN4C</name>
        <name evidence="21 22">Nogo-C</name>
        <sequence type="described" ref="VSP_018088 VSP_018091"/>
    </isoform>
    <isoform>
        <id>Q99P72-4</id>
        <name>B2</name>
        <name evidence="21">RTN4B2</name>
        <name evidence="21">Nogo-B2</name>
        <sequence type="described" ref="VSP_060063"/>
    </isoform>
    <isoform>
        <id>Q99P72-5</id>
        <name>B</name>
        <name evidence="22">RTN4B</name>
        <name evidence="22">Nogo-B</name>
        <name evidence="21">RTN4B1</name>
        <name evidence="21">Nogo-B1</name>
        <sequence type="described" ref="VSP_060062"/>
    </isoform>
</comment>
<comment type="tissue specificity">
    <molecule>Isoform A</molecule>
    <text evidence="7 13 18 19">Expressed in cardiomyocytes (at protein level) (PubMed:32075961). Highly expressed in brain but not deteceted in aorta, femoral and carotid arteries (PubMed:15034570). Main isoform expressed in neurons (PubMed:23625008, PubMed:27786289).</text>
</comment>
<comment type="tissue specificity">
    <molecule>Isoform B</molecule>
    <text evidence="7 8 13 14 15 16 18 19">Expressed in cardiomyocytes (at protein level) (PubMed:32075961). Expressed in splenocytes, T-cells, B-cells, bone marrow derived dendritic cells and macrophages (at protein level) (PubMed:19805174, PubMed:25917084). Expressed in neurons (PubMed:23625008, PubMed:27786289). Highly expressed in endothelial cells and vascular smooth muscle cells, including blood vessels and mesenteric arteries (PubMed:15034570, PubMed:26301690). Expressed in bronchial and alveolar epithelial cells as well as vascular endothelial cells of lungs (PubMed:26174362).</text>
</comment>
<comment type="tissue specificity">
    <molecule>Isoform B2</molecule>
    <text evidence="14">Expressed in B-cells, bone marrow dendritic cells and macrophages (at protein level).</text>
</comment>
<comment type="tissue specificity">
    <molecule>Isoform C</molecule>
    <text evidence="17">Expressed in cardiomyocytes.</text>
</comment>
<comment type="tissue specificity">
    <molecule>Isoform D</molecule>
    <text evidence="13 18">Expressed at very low levels in neurons.</text>
</comment>
<comment type="developmental stage">
    <text evidence="9 12">Expressed in radial glial cells, migrating postmitotic as well as postmigratory neurons of the embryonic cortex (PubMed:20093372). Expression is down-regulated in the ganglion cell layer and in the plexiform layer of the retina at P8 (PubMed:20093372). Isoform B: expression increases in regenirating liver (PubMed:23299899).</text>
</comment>
<comment type="induction">
    <text evidence="8 15 17">Isoform C: expression is induced by hypoxic treatments or myocardial infarction (PubMed:27763637). Isoform C: is negatively regulated by the microRNA miR-182 (PubMed:27763637). Isoform B: expression is down-regulated by LPS in alveolar epithelium (PubMed:26174362). Isoform B: induced during tissue ischemia (PubMed:19805174). Isoform B2: induced during tissue ischemia (PubMed:19805174).</text>
</comment>
<comment type="domain">
    <text evidence="1">Three regions, residues 59-172, 544-725 and the loop 66 amino acids, between the two transmembrane domains, known as Nogo-66 loop, appear to be responsible for the inhibitory effect on neurite outgrowth and the spreading of neurons. This Nogo-66 loop also mediates the binding of RTN4 to its receptor (By similarity).</text>
</comment>
<comment type="domain">
    <molecule>Isoform B</molecule>
    <text evidence="2">N-terminal part, called Am-Nogo-B(1-200), is the functional domain for RTN4B-mediated signaling in endothelial and vascular smooth muscle cells.</text>
</comment>
<comment type="disruption phenotype">
    <text evidence="7 8 9 10 11 13 14 16 17">Isoform A mutant embryos show defects in the development of fore- and hindlimb innervation. Increased fasciculation and decreased branching of nerves innervating fore- and hindlimbs seen. Disturbances of the radial migration pattern of neuronal precursor cells seen in embryonic cortex (PubMed:20093372, PubMed:20573699). Isoform A mutants show increased density of blood vessels in postnatal brain, which is lost in adult brain (PubMed:23625008). Knockout mice for isoforms A and B are markedly hypotensive compared to control mice, with no significant increase of heart rate. They have mesenteric arteries thinner than controls (PubMed:26301690). Upon vascular injury mutants show markedly enhanced neointima formation and, in some cases, complete occlusion of the femoral artery (PubMed:15034570). Mutants for isoforms A and B show a marked reduction in neutrophil and monocyte recruitment to sites of inflammation (PubMed:21183689). Mutants for isoforms A and B are insensitive to stimulation with TLR9, TLR3 and TLR7 ligands (PubMed:25917084). Mutant mice for isoform C display improved cardiac function, smaller infarct area and less apoptotic cells after myocardial infarction (PubMed:27763637). Knockout mice show impaired responses to tissue injury (PubMed:19805174).</text>
</comment>
<comment type="sequence caution" evidence="24">
    <conflict type="erroneous initiation">
        <sequence resource="EMBL-CDS" id="AAH32192"/>
    </conflict>
    <text>Truncated N-terminus.</text>
</comment>
<comment type="sequence caution" evidence="24">
    <conflict type="erroneous termination">
        <sequence resource="EMBL" id="BC056373"/>
    </conflict>
    <text>Truncated C-terminus.</text>
</comment>
<comment type="online information" name="Protein Spotlight">
    <link uri="https://www.proteinspotlight.org/back_issues/069"/>
    <text>Nerve regrowth: nipped by a no-go - Issue 69 of April 2006</text>
</comment>
<gene>
    <name evidence="25" type="primary">Rtn4</name>
    <name type="synonym">Kiaa0886</name>
    <name evidence="22" type="synonym">Nogo</name>
</gene>
<name>RTN4_MOUSE</name>
<proteinExistence type="evidence at protein level"/>
<evidence type="ECO:0000250" key="1">
    <source>
        <dbReference type="UniProtKB" id="Q9JK11"/>
    </source>
</evidence>
<evidence type="ECO:0000250" key="2">
    <source>
        <dbReference type="UniProtKB" id="Q9NQC3"/>
    </source>
</evidence>
<evidence type="ECO:0000255" key="3"/>
<evidence type="ECO:0000255" key="4">
    <source>
        <dbReference type="PROSITE-ProRule" id="PRU00170"/>
    </source>
</evidence>
<evidence type="ECO:0000256" key="5">
    <source>
        <dbReference type="SAM" id="MobiDB-lite"/>
    </source>
</evidence>
<evidence type="ECO:0000269" key="6">
    <source>
    </source>
</evidence>
<evidence type="ECO:0000269" key="7">
    <source>
    </source>
</evidence>
<evidence type="ECO:0000269" key="8">
    <source>
    </source>
</evidence>
<evidence type="ECO:0000269" key="9">
    <source>
    </source>
</evidence>
<evidence type="ECO:0000269" key="10">
    <source>
    </source>
</evidence>
<evidence type="ECO:0000269" key="11">
    <source>
    </source>
</evidence>
<evidence type="ECO:0000269" key="12">
    <source>
    </source>
</evidence>
<evidence type="ECO:0000269" key="13">
    <source>
    </source>
</evidence>
<evidence type="ECO:0000269" key="14">
    <source>
    </source>
</evidence>
<evidence type="ECO:0000269" key="15">
    <source>
    </source>
</evidence>
<evidence type="ECO:0000269" key="16">
    <source>
    </source>
</evidence>
<evidence type="ECO:0000269" key="17">
    <source>
    </source>
</evidence>
<evidence type="ECO:0000269" key="18">
    <source>
    </source>
</evidence>
<evidence type="ECO:0000269" key="19">
    <source>
    </source>
</evidence>
<evidence type="ECO:0000269" key="20">
    <source>
    </source>
</evidence>
<evidence type="ECO:0000303" key="21">
    <source>
    </source>
</evidence>
<evidence type="ECO:0000303" key="22">
    <source>
    </source>
</evidence>
<evidence type="ECO:0000303" key="23">
    <source ref="2"/>
</evidence>
<evidence type="ECO:0000305" key="24"/>
<evidence type="ECO:0000312" key="25">
    <source>
        <dbReference type="MGI" id="MGI:1915835"/>
    </source>
</evidence>
<evidence type="ECO:0007744" key="26">
    <source>
    </source>
</evidence>
<evidence type="ECO:0007744" key="27">
    <source>
    </source>
</evidence>
<evidence type="ECO:0007744" key="28">
    <source>
    </source>
</evidence>
<evidence type="ECO:0007744" key="29">
    <source>
    </source>
</evidence>
<evidence type="ECO:0007744" key="30">
    <source>
    </source>
</evidence>
<evidence type="ECO:0007829" key="31">
    <source>
        <dbReference type="PDB" id="2KO2"/>
    </source>
</evidence>